<feature type="chain" id="PRO_1000199925" description="Sulfur carrier protein TusA">
    <location>
        <begin position="1"/>
        <end position="84"/>
    </location>
</feature>
<feature type="active site" description="Cysteine persulfide intermediate" evidence="1">
    <location>
        <position position="19"/>
    </location>
</feature>
<gene>
    <name evidence="1" type="primary">tusA</name>
    <name type="ordered locus">PMI3597</name>
</gene>
<dbReference type="EMBL" id="AM942759">
    <property type="protein sequence ID" value="CAR47038.1"/>
    <property type="molecule type" value="Genomic_DNA"/>
</dbReference>
<dbReference type="RefSeq" id="WP_004245397.1">
    <property type="nucleotide sequence ID" value="NC_010554.1"/>
</dbReference>
<dbReference type="SMR" id="B4EWZ6"/>
<dbReference type="EnsemblBacteria" id="CAR47038">
    <property type="protein sequence ID" value="CAR47038"/>
    <property type="gene ID" value="PMI3597"/>
</dbReference>
<dbReference type="GeneID" id="6802393"/>
<dbReference type="KEGG" id="pmr:PMI3597"/>
<dbReference type="eggNOG" id="COG0425">
    <property type="taxonomic scope" value="Bacteria"/>
</dbReference>
<dbReference type="HOGENOM" id="CLU_165255_5_0_6"/>
<dbReference type="Proteomes" id="UP000008319">
    <property type="component" value="Chromosome"/>
</dbReference>
<dbReference type="GO" id="GO:0005737">
    <property type="term" value="C:cytoplasm"/>
    <property type="evidence" value="ECO:0007669"/>
    <property type="project" value="UniProtKB-SubCell"/>
</dbReference>
<dbReference type="GO" id="GO:0097163">
    <property type="term" value="F:sulfur carrier activity"/>
    <property type="evidence" value="ECO:0007669"/>
    <property type="project" value="UniProtKB-UniRule"/>
</dbReference>
<dbReference type="GO" id="GO:0002143">
    <property type="term" value="P:tRNA wobble position uridine thiolation"/>
    <property type="evidence" value="ECO:0007669"/>
    <property type="project" value="InterPro"/>
</dbReference>
<dbReference type="CDD" id="cd03423">
    <property type="entry name" value="SirA"/>
    <property type="match status" value="1"/>
</dbReference>
<dbReference type="Gene3D" id="3.30.110.40">
    <property type="entry name" value="TusA-like domain"/>
    <property type="match status" value="1"/>
</dbReference>
<dbReference type="HAMAP" id="MF_00413">
    <property type="entry name" value="Thiourid_synth_A"/>
    <property type="match status" value="1"/>
</dbReference>
<dbReference type="InterPro" id="IPR022931">
    <property type="entry name" value="Sulphur_carrier_TusA"/>
</dbReference>
<dbReference type="InterPro" id="IPR001455">
    <property type="entry name" value="TusA-like"/>
</dbReference>
<dbReference type="InterPro" id="IPR036868">
    <property type="entry name" value="TusA-like_sf"/>
</dbReference>
<dbReference type="NCBIfam" id="NF001423">
    <property type="entry name" value="PRK00299.1"/>
    <property type="match status" value="1"/>
</dbReference>
<dbReference type="PANTHER" id="PTHR33279:SF2">
    <property type="entry name" value="SULFUR CARRIER PROTEIN TUSA"/>
    <property type="match status" value="1"/>
</dbReference>
<dbReference type="PANTHER" id="PTHR33279">
    <property type="entry name" value="SULFUR CARRIER PROTEIN YEDF-RELATED"/>
    <property type="match status" value="1"/>
</dbReference>
<dbReference type="Pfam" id="PF01206">
    <property type="entry name" value="TusA"/>
    <property type="match status" value="1"/>
</dbReference>
<dbReference type="SUPFAM" id="SSF64307">
    <property type="entry name" value="SirA-like"/>
    <property type="match status" value="1"/>
</dbReference>
<dbReference type="PROSITE" id="PS01148">
    <property type="entry name" value="UPF0033"/>
    <property type="match status" value="1"/>
</dbReference>
<name>TUSA_PROMH</name>
<proteinExistence type="inferred from homology"/>
<sequence length="84" mass="9638">MNAQFDDATKTLDTLGLRCPEPVMLVRKTIRNMAQGETLLVIADDPATVRDIPGFCRFMEHDLLQQETQATPYRYLIRKKEGQL</sequence>
<comment type="function">
    <text evidence="1">Sulfur carrier protein involved in sulfur trafficking in the cell. Part of a sulfur-relay system required for 2-thiolation during synthesis of 2-thiouridine of the modified wobble base 5-methylaminomethyl-2-thiouridine (mnm(5)s(2)U) in tRNA. Interacts with IscS and stimulates its cysteine desulfurase activity. Accepts an activated sulfur from IscS, which is then transferred to TusD, and thus determines the direction of sulfur flow from IscS to 2-thiouridine formation. Also appears to be involved in sulfur transfer for the biosynthesis of molybdopterin.</text>
</comment>
<comment type="pathway">
    <text evidence="1">tRNA modification.</text>
</comment>
<comment type="subunit">
    <text evidence="1">Interacts with IscS.</text>
</comment>
<comment type="subcellular location">
    <subcellularLocation>
        <location evidence="1">Cytoplasm</location>
    </subcellularLocation>
</comment>
<comment type="similarity">
    <text evidence="1">Belongs to the sulfur carrier protein TusA family.</text>
</comment>
<reference key="1">
    <citation type="journal article" date="2008" name="J. Bacteriol.">
        <title>Complete genome sequence of uropathogenic Proteus mirabilis, a master of both adherence and motility.</title>
        <authorList>
            <person name="Pearson M.M."/>
            <person name="Sebaihia M."/>
            <person name="Churcher C."/>
            <person name="Quail M.A."/>
            <person name="Seshasayee A.S."/>
            <person name="Luscombe N.M."/>
            <person name="Abdellah Z."/>
            <person name="Arrosmith C."/>
            <person name="Atkin B."/>
            <person name="Chillingworth T."/>
            <person name="Hauser H."/>
            <person name="Jagels K."/>
            <person name="Moule S."/>
            <person name="Mungall K."/>
            <person name="Norbertczak H."/>
            <person name="Rabbinowitsch E."/>
            <person name="Walker D."/>
            <person name="Whithead S."/>
            <person name="Thomson N.R."/>
            <person name="Rather P.N."/>
            <person name="Parkhill J."/>
            <person name="Mobley H.L.T."/>
        </authorList>
    </citation>
    <scope>NUCLEOTIDE SEQUENCE [LARGE SCALE GENOMIC DNA]</scope>
    <source>
        <strain>HI4320</strain>
    </source>
</reference>
<organism>
    <name type="scientific">Proteus mirabilis (strain HI4320)</name>
    <dbReference type="NCBI Taxonomy" id="529507"/>
    <lineage>
        <taxon>Bacteria</taxon>
        <taxon>Pseudomonadati</taxon>
        <taxon>Pseudomonadota</taxon>
        <taxon>Gammaproteobacteria</taxon>
        <taxon>Enterobacterales</taxon>
        <taxon>Morganellaceae</taxon>
        <taxon>Proteus</taxon>
    </lineage>
</organism>
<keyword id="KW-0963">Cytoplasm</keyword>
<keyword id="KW-1185">Reference proteome</keyword>
<keyword id="KW-0819">tRNA processing</keyword>
<protein>
    <recommendedName>
        <fullName evidence="1">Sulfur carrier protein TusA</fullName>
    </recommendedName>
    <alternativeName>
        <fullName evidence="1">Sulfur mediator TusA</fullName>
    </alternativeName>
    <alternativeName>
        <fullName evidence="1">Sulfur transfer protein TusA</fullName>
    </alternativeName>
    <alternativeName>
        <fullName evidence="1">tRNA 2-thiouridine synthesizing protein A</fullName>
    </alternativeName>
</protein>
<accession>B4EWZ6</accession>
<evidence type="ECO:0000255" key="1">
    <source>
        <dbReference type="HAMAP-Rule" id="MF_00413"/>
    </source>
</evidence>